<proteinExistence type="inferred from homology"/>
<feature type="chain" id="PRO_1000144306" description="Large ribosomal subunit protein uL14">
    <location>
        <begin position="1"/>
        <end position="122"/>
    </location>
</feature>
<sequence length="122" mass="13423">MIQKETNLVVADNSGAKKVRCIHVFGGTGRRYASLGDQIIVSVKAAVPGGIVKKKDVCRAVVVRCVKESRRKDGSYIRFDENAVVLLNAQGEPRGTRIFGPVARELRDRKFMKIVSLAPEVL</sequence>
<evidence type="ECO:0000255" key="1">
    <source>
        <dbReference type="HAMAP-Rule" id="MF_01367"/>
    </source>
</evidence>
<evidence type="ECO:0000305" key="2"/>
<dbReference type="EMBL" id="CP001110">
    <property type="protein sequence ID" value="ACF42632.1"/>
    <property type="molecule type" value="Genomic_DNA"/>
</dbReference>
<dbReference type="RefSeq" id="WP_012507128.1">
    <property type="nucleotide sequence ID" value="NC_011060.1"/>
</dbReference>
<dbReference type="SMR" id="B4SBV7"/>
<dbReference type="STRING" id="324925.Ppha_0299"/>
<dbReference type="KEGG" id="pph:Ppha_0299"/>
<dbReference type="eggNOG" id="COG0093">
    <property type="taxonomic scope" value="Bacteria"/>
</dbReference>
<dbReference type="HOGENOM" id="CLU_095071_2_1_10"/>
<dbReference type="OrthoDB" id="9806379at2"/>
<dbReference type="Proteomes" id="UP000002724">
    <property type="component" value="Chromosome"/>
</dbReference>
<dbReference type="GO" id="GO:0022625">
    <property type="term" value="C:cytosolic large ribosomal subunit"/>
    <property type="evidence" value="ECO:0007669"/>
    <property type="project" value="TreeGrafter"/>
</dbReference>
<dbReference type="GO" id="GO:0070180">
    <property type="term" value="F:large ribosomal subunit rRNA binding"/>
    <property type="evidence" value="ECO:0007669"/>
    <property type="project" value="TreeGrafter"/>
</dbReference>
<dbReference type="GO" id="GO:0003735">
    <property type="term" value="F:structural constituent of ribosome"/>
    <property type="evidence" value="ECO:0007669"/>
    <property type="project" value="InterPro"/>
</dbReference>
<dbReference type="GO" id="GO:0006412">
    <property type="term" value="P:translation"/>
    <property type="evidence" value="ECO:0007669"/>
    <property type="project" value="UniProtKB-UniRule"/>
</dbReference>
<dbReference type="CDD" id="cd00337">
    <property type="entry name" value="Ribosomal_uL14"/>
    <property type="match status" value="1"/>
</dbReference>
<dbReference type="FunFam" id="2.40.150.20:FF:000001">
    <property type="entry name" value="50S ribosomal protein L14"/>
    <property type="match status" value="1"/>
</dbReference>
<dbReference type="Gene3D" id="2.40.150.20">
    <property type="entry name" value="Ribosomal protein L14"/>
    <property type="match status" value="1"/>
</dbReference>
<dbReference type="HAMAP" id="MF_01367">
    <property type="entry name" value="Ribosomal_uL14"/>
    <property type="match status" value="1"/>
</dbReference>
<dbReference type="InterPro" id="IPR000218">
    <property type="entry name" value="Ribosomal_uL14"/>
</dbReference>
<dbReference type="InterPro" id="IPR005745">
    <property type="entry name" value="Ribosomal_uL14_bac-type"/>
</dbReference>
<dbReference type="InterPro" id="IPR019972">
    <property type="entry name" value="Ribosomal_uL14_CS"/>
</dbReference>
<dbReference type="InterPro" id="IPR036853">
    <property type="entry name" value="Ribosomal_uL14_sf"/>
</dbReference>
<dbReference type="NCBIfam" id="TIGR01067">
    <property type="entry name" value="rplN_bact"/>
    <property type="match status" value="1"/>
</dbReference>
<dbReference type="PANTHER" id="PTHR11761">
    <property type="entry name" value="50S/60S RIBOSOMAL PROTEIN L14/L23"/>
    <property type="match status" value="1"/>
</dbReference>
<dbReference type="PANTHER" id="PTHR11761:SF3">
    <property type="entry name" value="LARGE RIBOSOMAL SUBUNIT PROTEIN UL14M"/>
    <property type="match status" value="1"/>
</dbReference>
<dbReference type="Pfam" id="PF00238">
    <property type="entry name" value="Ribosomal_L14"/>
    <property type="match status" value="1"/>
</dbReference>
<dbReference type="SMART" id="SM01374">
    <property type="entry name" value="Ribosomal_L14"/>
    <property type="match status" value="1"/>
</dbReference>
<dbReference type="SUPFAM" id="SSF50193">
    <property type="entry name" value="Ribosomal protein L14"/>
    <property type="match status" value="1"/>
</dbReference>
<dbReference type="PROSITE" id="PS00049">
    <property type="entry name" value="RIBOSOMAL_L14"/>
    <property type="match status" value="1"/>
</dbReference>
<accession>B4SBV7</accession>
<reference key="1">
    <citation type="submission" date="2008-06" db="EMBL/GenBank/DDBJ databases">
        <title>Complete sequence of Pelodictyon phaeoclathratiforme BU-1.</title>
        <authorList>
            <consortium name="US DOE Joint Genome Institute"/>
            <person name="Lucas S."/>
            <person name="Copeland A."/>
            <person name="Lapidus A."/>
            <person name="Glavina del Rio T."/>
            <person name="Dalin E."/>
            <person name="Tice H."/>
            <person name="Bruce D."/>
            <person name="Goodwin L."/>
            <person name="Pitluck S."/>
            <person name="Schmutz J."/>
            <person name="Larimer F."/>
            <person name="Land M."/>
            <person name="Hauser L."/>
            <person name="Kyrpides N."/>
            <person name="Mikhailova N."/>
            <person name="Liu Z."/>
            <person name="Li T."/>
            <person name="Zhao F."/>
            <person name="Overmann J."/>
            <person name="Bryant D.A."/>
            <person name="Richardson P."/>
        </authorList>
    </citation>
    <scope>NUCLEOTIDE SEQUENCE [LARGE SCALE GENOMIC DNA]</scope>
    <source>
        <strain>DSM 5477 / BU-1</strain>
    </source>
</reference>
<name>RL14_PELPB</name>
<keyword id="KW-1185">Reference proteome</keyword>
<keyword id="KW-0687">Ribonucleoprotein</keyword>
<keyword id="KW-0689">Ribosomal protein</keyword>
<keyword id="KW-0694">RNA-binding</keyword>
<keyword id="KW-0699">rRNA-binding</keyword>
<protein>
    <recommendedName>
        <fullName evidence="1">Large ribosomal subunit protein uL14</fullName>
    </recommendedName>
    <alternativeName>
        <fullName evidence="2">50S ribosomal protein L14</fullName>
    </alternativeName>
</protein>
<comment type="function">
    <text evidence="1">Binds to 23S rRNA. Forms part of two intersubunit bridges in the 70S ribosome.</text>
</comment>
<comment type="subunit">
    <text evidence="1">Part of the 50S ribosomal subunit. Forms a cluster with proteins L3 and L19. In the 70S ribosome, L14 and L19 interact and together make contacts with the 16S rRNA in bridges B5 and B8.</text>
</comment>
<comment type="similarity">
    <text evidence="1">Belongs to the universal ribosomal protein uL14 family.</text>
</comment>
<organism>
    <name type="scientific">Pelodictyon phaeoclathratiforme (strain DSM 5477 / BU-1)</name>
    <dbReference type="NCBI Taxonomy" id="324925"/>
    <lineage>
        <taxon>Bacteria</taxon>
        <taxon>Pseudomonadati</taxon>
        <taxon>Chlorobiota</taxon>
        <taxon>Chlorobiia</taxon>
        <taxon>Chlorobiales</taxon>
        <taxon>Chlorobiaceae</taxon>
        <taxon>Chlorobium/Pelodictyon group</taxon>
        <taxon>Pelodictyon</taxon>
    </lineage>
</organism>
<gene>
    <name evidence="1" type="primary">rplN</name>
    <name type="ordered locus">Ppha_0299</name>
</gene>